<name>KDSA_ACISJ</name>
<gene>
    <name evidence="1" type="primary">kdsA</name>
    <name type="ordered locus">Ajs_0999</name>
</gene>
<proteinExistence type="inferred from homology"/>
<keyword id="KW-0963">Cytoplasm</keyword>
<keyword id="KW-0448">Lipopolysaccharide biosynthesis</keyword>
<keyword id="KW-0808">Transferase</keyword>
<dbReference type="EC" id="2.5.1.55" evidence="1"/>
<dbReference type="EMBL" id="CP000539">
    <property type="protein sequence ID" value="ABM41237.1"/>
    <property type="molecule type" value="Genomic_DNA"/>
</dbReference>
<dbReference type="SMR" id="A1W4R2"/>
<dbReference type="STRING" id="232721.Ajs_0999"/>
<dbReference type="KEGG" id="ajs:Ajs_0999"/>
<dbReference type="eggNOG" id="COG2877">
    <property type="taxonomic scope" value="Bacteria"/>
</dbReference>
<dbReference type="HOGENOM" id="CLU_036666_0_0_4"/>
<dbReference type="UniPathway" id="UPA00030"/>
<dbReference type="UniPathway" id="UPA00357">
    <property type="reaction ID" value="UER00474"/>
</dbReference>
<dbReference type="Proteomes" id="UP000000645">
    <property type="component" value="Chromosome"/>
</dbReference>
<dbReference type="GO" id="GO:0005737">
    <property type="term" value="C:cytoplasm"/>
    <property type="evidence" value="ECO:0007669"/>
    <property type="project" value="UniProtKB-SubCell"/>
</dbReference>
<dbReference type="GO" id="GO:0008676">
    <property type="term" value="F:3-deoxy-8-phosphooctulonate synthase activity"/>
    <property type="evidence" value="ECO:0007669"/>
    <property type="project" value="UniProtKB-UniRule"/>
</dbReference>
<dbReference type="GO" id="GO:0019294">
    <property type="term" value="P:keto-3-deoxy-D-manno-octulosonic acid biosynthetic process"/>
    <property type="evidence" value="ECO:0007669"/>
    <property type="project" value="UniProtKB-UniRule"/>
</dbReference>
<dbReference type="Gene3D" id="3.20.20.70">
    <property type="entry name" value="Aldolase class I"/>
    <property type="match status" value="1"/>
</dbReference>
<dbReference type="HAMAP" id="MF_00056">
    <property type="entry name" value="KDO8P_synth"/>
    <property type="match status" value="1"/>
</dbReference>
<dbReference type="InterPro" id="IPR013785">
    <property type="entry name" value="Aldolase_TIM"/>
</dbReference>
<dbReference type="InterPro" id="IPR006218">
    <property type="entry name" value="DAHP1/KDSA"/>
</dbReference>
<dbReference type="InterPro" id="IPR006269">
    <property type="entry name" value="KDO8P_synthase"/>
</dbReference>
<dbReference type="NCBIfam" id="TIGR01362">
    <property type="entry name" value="KDO8P_synth"/>
    <property type="match status" value="1"/>
</dbReference>
<dbReference type="NCBIfam" id="NF003543">
    <property type="entry name" value="PRK05198.1"/>
    <property type="match status" value="1"/>
</dbReference>
<dbReference type="PANTHER" id="PTHR21057">
    <property type="entry name" value="PHOSPHO-2-DEHYDRO-3-DEOXYHEPTONATE ALDOLASE"/>
    <property type="match status" value="1"/>
</dbReference>
<dbReference type="Pfam" id="PF00793">
    <property type="entry name" value="DAHP_synth_1"/>
    <property type="match status" value="1"/>
</dbReference>
<dbReference type="SUPFAM" id="SSF51569">
    <property type="entry name" value="Aldolase"/>
    <property type="match status" value="1"/>
</dbReference>
<reference key="1">
    <citation type="submission" date="2006-12" db="EMBL/GenBank/DDBJ databases">
        <title>Complete sequence of chromosome 1 of Acidovorax sp. JS42.</title>
        <authorList>
            <person name="Copeland A."/>
            <person name="Lucas S."/>
            <person name="Lapidus A."/>
            <person name="Barry K."/>
            <person name="Detter J.C."/>
            <person name="Glavina del Rio T."/>
            <person name="Dalin E."/>
            <person name="Tice H."/>
            <person name="Pitluck S."/>
            <person name="Chertkov O."/>
            <person name="Brettin T."/>
            <person name="Bruce D."/>
            <person name="Han C."/>
            <person name="Tapia R."/>
            <person name="Gilna P."/>
            <person name="Schmutz J."/>
            <person name="Larimer F."/>
            <person name="Land M."/>
            <person name="Hauser L."/>
            <person name="Kyrpides N."/>
            <person name="Kim E."/>
            <person name="Stahl D."/>
            <person name="Richardson P."/>
        </authorList>
    </citation>
    <scope>NUCLEOTIDE SEQUENCE [LARGE SCALE GENOMIC DNA]</scope>
    <source>
        <strain>JS42</strain>
    </source>
</reference>
<organism>
    <name type="scientific">Acidovorax sp. (strain JS42)</name>
    <dbReference type="NCBI Taxonomy" id="232721"/>
    <lineage>
        <taxon>Bacteria</taxon>
        <taxon>Pseudomonadati</taxon>
        <taxon>Pseudomonadota</taxon>
        <taxon>Betaproteobacteria</taxon>
        <taxon>Burkholderiales</taxon>
        <taxon>Comamonadaceae</taxon>
        <taxon>Acidovorax</taxon>
    </lineage>
</organism>
<evidence type="ECO:0000255" key="1">
    <source>
        <dbReference type="HAMAP-Rule" id="MF_00056"/>
    </source>
</evidence>
<sequence>MQLCGFDVGLDQRFFLIAGTCSIEGLEMSLDVAGQLKEACAPLGIPLIYKGSFDKANRSSGTSKRGVGLDAGLKILDEVRRQLQLPILTDVHDTSHVAEVASVVDVLQTPAFLCRQTDFIRAVAQSGKPVNIKKGQFLAPWDMKNVIDKARAAAREVGLSEDRFLACERGVSFGYNNLVADMTSLAEMRNSGAPVVFDVTHSVQKPGGLGAVSGGARDMVPVLARAGVAVGVAGLFMETHPKPAEAWSDGPNAVPLKHMRALLETLVALDDVTKKNGFLENNFGA</sequence>
<accession>A1W4R2</accession>
<protein>
    <recommendedName>
        <fullName evidence="1">2-dehydro-3-deoxyphosphooctonate aldolase</fullName>
        <ecNumber evidence="1">2.5.1.55</ecNumber>
    </recommendedName>
    <alternativeName>
        <fullName evidence="1">3-deoxy-D-manno-octulosonic acid 8-phosphate synthase</fullName>
    </alternativeName>
    <alternativeName>
        <fullName evidence="1">KDO-8-phosphate synthase</fullName>
        <shortName evidence="1">KDO 8-P synthase</shortName>
        <shortName evidence="1">KDOPS</shortName>
    </alternativeName>
    <alternativeName>
        <fullName evidence="1">Phospho-2-dehydro-3-deoxyoctonate aldolase</fullName>
    </alternativeName>
</protein>
<feature type="chain" id="PRO_0000304428" description="2-dehydro-3-deoxyphosphooctonate aldolase">
    <location>
        <begin position="1"/>
        <end position="285"/>
    </location>
</feature>
<comment type="catalytic activity">
    <reaction evidence="1">
        <text>D-arabinose 5-phosphate + phosphoenolpyruvate + H2O = 3-deoxy-alpha-D-manno-2-octulosonate-8-phosphate + phosphate</text>
        <dbReference type="Rhea" id="RHEA:14053"/>
        <dbReference type="ChEBI" id="CHEBI:15377"/>
        <dbReference type="ChEBI" id="CHEBI:43474"/>
        <dbReference type="ChEBI" id="CHEBI:57693"/>
        <dbReference type="ChEBI" id="CHEBI:58702"/>
        <dbReference type="ChEBI" id="CHEBI:85985"/>
        <dbReference type="EC" id="2.5.1.55"/>
    </reaction>
</comment>
<comment type="pathway">
    <text evidence="1">Carbohydrate biosynthesis; 3-deoxy-D-manno-octulosonate biosynthesis; 3-deoxy-D-manno-octulosonate from D-ribulose 5-phosphate: step 2/3.</text>
</comment>
<comment type="pathway">
    <text evidence="1">Bacterial outer membrane biogenesis; lipopolysaccharide biosynthesis.</text>
</comment>
<comment type="subcellular location">
    <subcellularLocation>
        <location evidence="1">Cytoplasm</location>
    </subcellularLocation>
</comment>
<comment type="similarity">
    <text evidence="1">Belongs to the KdsA family.</text>
</comment>